<feature type="chain" id="PRO_1000149071" description="Phosphoribosyl-AMP cyclohydrolase">
    <location>
        <begin position="1"/>
        <end position="132"/>
    </location>
</feature>
<feature type="binding site" evidence="1">
    <location>
        <position position="79"/>
    </location>
    <ligand>
        <name>Mg(2+)</name>
        <dbReference type="ChEBI" id="CHEBI:18420"/>
    </ligand>
</feature>
<feature type="binding site" evidence="1">
    <location>
        <position position="80"/>
    </location>
    <ligand>
        <name>Zn(2+)</name>
        <dbReference type="ChEBI" id="CHEBI:29105"/>
        <note>ligand shared between dimeric partners</note>
    </ligand>
</feature>
<feature type="binding site" evidence="1">
    <location>
        <position position="81"/>
    </location>
    <ligand>
        <name>Mg(2+)</name>
        <dbReference type="ChEBI" id="CHEBI:18420"/>
    </ligand>
</feature>
<feature type="binding site" evidence="1">
    <location>
        <position position="83"/>
    </location>
    <ligand>
        <name>Mg(2+)</name>
        <dbReference type="ChEBI" id="CHEBI:18420"/>
    </ligand>
</feature>
<feature type="binding site" evidence="1">
    <location>
        <position position="100"/>
    </location>
    <ligand>
        <name>Zn(2+)</name>
        <dbReference type="ChEBI" id="CHEBI:29105"/>
        <note>ligand shared between dimeric partners</note>
    </ligand>
</feature>
<feature type="binding site" evidence="1">
    <location>
        <position position="107"/>
    </location>
    <ligand>
        <name>Zn(2+)</name>
        <dbReference type="ChEBI" id="CHEBI:29105"/>
        <note>ligand shared between dimeric partners</note>
    </ligand>
</feature>
<organism>
    <name type="scientific">Acidovorax ebreus (strain TPSY)</name>
    <name type="common">Diaphorobacter sp. (strain TPSY)</name>
    <dbReference type="NCBI Taxonomy" id="535289"/>
    <lineage>
        <taxon>Bacteria</taxon>
        <taxon>Pseudomonadati</taxon>
        <taxon>Pseudomonadota</taxon>
        <taxon>Betaproteobacteria</taxon>
        <taxon>Burkholderiales</taxon>
        <taxon>Comamonadaceae</taxon>
        <taxon>Diaphorobacter</taxon>
    </lineage>
</organism>
<accession>B9MDW4</accession>
<name>HIS3_ACIET</name>
<dbReference type="EC" id="3.5.4.19" evidence="1"/>
<dbReference type="EMBL" id="CP001392">
    <property type="protein sequence ID" value="ACM32218.1"/>
    <property type="molecule type" value="Genomic_DNA"/>
</dbReference>
<dbReference type="RefSeq" id="WP_012655726.1">
    <property type="nucleotide sequence ID" value="NC_011992.1"/>
</dbReference>
<dbReference type="SMR" id="B9MDW4"/>
<dbReference type="KEGG" id="dia:Dtpsy_0739"/>
<dbReference type="eggNOG" id="COG0139">
    <property type="taxonomic scope" value="Bacteria"/>
</dbReference>
<dbReference type="HOGENOM" id="CLU_048577_5_0_4"/>
<dbReference type="UniPathway" id="UPA00031">
    <property type="reaction ID" value="UER00008"/>
</dbReference>
<dbReference type="Proteomes" id="UP000000450">
    <property type="component" value="Chromosome"/>
</dbReference>
<dbReference type="GO" id="GO:0005737">
    <property type="term" value="C:cytoplasm"/>
    <property type="evidence" value="ECO:0007669"/>
    <property type="project" value="UniProtKB-SubCell"/>
</dbReference>
<dbReference type="GO" id="GO:0000287">
    <property type="term" value="F:magnesium ion binding"/>
    <property type="evidence" value="ECO:0007669"/>
    <property type="project" value="UniProtKB-UniRule"/>
</dbReference>
<dbReference type="GO" id="GO:0004635">
    <property type="term" value="F:phosphoribosyl-AMP cyclohydrolase activity"/>
    <property type="evidence" value="ECO:0007669"/>
    <property type="project" value="UniProtKB-UniRule"/>
</dbReference>
<dbReference type="GO" id="GO:0008270">
    <property type="term" value="F:zinc ion binding"/>
    <property type="evidence" value="ECO:0007669"/>
    <property type="project" value="UniProtKB-UniRule"/>
</dbReference>
<dbReference type="GO" id="GO:0000105">
    <property type="term" value="P:L-histidine biosynthetic process"/>
    <property type="evidence" value="ECO:0007669"/>
    <property type="project" value="UniProtKB-UniRule"/>
</dbReference>
<dbReference type="FunFam" id="3.10.20.810:FF:000001">
    <property type="entry name" value="Histidine biosynthesis bifunctional protein HisIE"/>
    <property type="match status" value="1"/>
</dbReference>
<dbReference type="Gene3D" id="3.10.20.810">
    <property type="entry name" value="Phosphoribosyl-AMP cyclohydrolase"/>
    <property type="match status" value="1"/>
</dbReference>
<dbReference type="HAMAP" id="MF_01021">
    <property type="entry name" value="HisI"/>
    <property type="match status" value="1"/>
</dbReference>
<dbReference type="InterPro" id="IPR026660">
    <property type="entry name" value="PRA-CH"/>
</dbReference>
<dbReference type="InterPro" id="IPR002496">
    <property type="entry name" value="PRib_AMP_CycHydrolase_dom"/>
</dbReference>
<dbReference type="InterPro" id="IPR038019">
    <property type="entry name" value="PRib_AMP_CycHydrolase_sf"/>
</dbReference>
<dbReference type="NCBIfam" id="NF000768">
    <property type="entry name" value="PRK00051.1"/>
    <property type="match status" value="1"/>
</dbReference>
<dbReference type="PANTHER" id="PTHR42945">
    <property type="entry name" value="HISTIDINE BIOSYNTHESIS BIFUNCTIONAL PROTEIN"/>
    <property type="match status" value="1"/>
</dbReference>
<dbReference type="PANTHER" id="PTHR42945:SF1">
    <property type="entry name" value="HISTIDINE BIOSYNTHESIS BIFUNCTIONAL PROTEIN HIS7"/>
    <property type="match status" value="1"/>
</dbReference>
<dbReference type="Pfam" id="PF01502">
    <property type="entry name" value="PRA-CH"/>
    <property type="match status" value="1"/>
</dbReference>
<dbReference type="SUPFAM" id="SSF141734">
    <property type="entry name" value="HisI-like"/>
    <property type="match status" value="1"/>
</dbReference>
<gene>
    <name evidence="1" type="primary">hisI</name>
    <name type="ordered locus">Dtpsy_0739</name>
</gene>
<reference key="1">
    <citation type="submission" date="2009-01" db="EMBL/GenBank/DDBJ databases">
        <title>Complete sequence of Diaphorobacter sp. TPSY.</title>
        <authorList>
            <consortium name="US DOE Joint Genome Institute"/>
            <person name="Lucas S."/>
            <person name="Copeland A."/>
            <person name="Lapidus A."/>
            <person name="Glavina del Rio T."/>
            <person name="Tice H."/>
            <person name="Bruce D."/>
            <person name="Goodwin L."/>
            <person name="Pitluck S."/>
            <person name="Chertkov O."/>
            <person name="Brettin T."/>
            <person name="Detter J.C."/>
            <person name="Han C."/>
            <person name="Larimer F."/>
            <person name="Land M."/>
            <person name="Hauser L."/>
            <person name="Kyrpides N."/>
            <person name="Mikhailova N."/>
            <person name="Coates J.D."/>
        </authorList>
    </citation>
    <scope>NUCLEOTIDE SEQUENCE [LARGE SCALE GENOMIC DNA]</scope>
    <source>
        <strain>TPSY</strain>
    </source>
</reference>
<keyword id="KW-0028">Amino-acid biosynthesis</keyword>
<keyword id="KW-0963">Cytoplasm</keyword>
<keyword id="KW-0368">Histidine biosynthesis</keyword>
<keyword id="KW-0378">Hydrolase</keyword>
<keyword id="KW-0460">Magnesium</keyword>
<keyword id="KW-0479">Metal-binding</keyword>
<keyword id="KW-1185">Reference proteome</keyword>
<keyword id="KW-0862">Zinc</keyword>
<comment type="function">
    <text evidence="1">Catalyzes the hydrolysis of the adenine ring of phosphoribosyl-AMP.</text>
</comment>
<comment type="catalytic activity">
    <reaction evidence="1">
        <text>1-(5-phospho-beta-D-ribosyl)-5'-AMP + H2O = 1-(5-phospho-beta-D-ribosyl)-5-[(5-phospho-beta-D-ribosylamino)methylideneamino]imidazole-4-carboxamide</text>
        <dbReference type="Rhea" id="RHEA:20049"/>
        <dbReference type="ChEBI" id="CHEBI:15377"/>
        <dbReference type="ChEBI" id="CHEBI:58435"/>
        <dbReference type="ChEBI" id="CHEBI:59457"/>
        <dbReference type="EC" id="3.5.4.19"/>
    </reaction>
</comment>
<comment type="cofactor">
    <cofactor evidence="1">
        <name>Mg(2+)</name>
        <dbReference type="ChEBI" id="CHEBI:18420"/>
    </cofactor>
    <text evidence="1">Binds 1 Mg(2+) ion per subunit.</text>
</comment>
<comment type="cofactor">
    <cofactor evidence="1">
        <name>Zn(2+)</name>
        <dbReference type="ChEBI" id="CHEBI:29105"/>
    </cofactor>
    <text evidence="1">Binds 1 zinc ion per subunit.</text>
</comment>
<comment type="pathway">
    <text evidence="1">Amino-acid biosynthesis; L-histidine biosynthesis; L-histidine from 5-phospho-alpha-D-ribose 1-diphosphate: step 3/9.</text>
</comment>
<comment type="subunit">
    <text evidence="1">Homodimer.</text>
</comment>
<comment type="subcellular location">
    <subcellularLocation>
        <location evidence="1">Cytoplasm</location>
    </subcellularLocation>
</comment>
<comment type="similarity">
    <text evidence="1">Belongs to the PRA-CH family.</text>
</comment>
<protein>
    <recommendedName>
        <fullName evidence="1">Phosphoribosyl-AMP cyclohydrolase</fullName>
        <shortName evidence="1">PRA-CH</shortName>
        <ecNumber evidence="1">3.5.4.19</ecNumber>
    </recommendedName>
</protein>
<evidence type="ECO:0000255" key="1">
    <source>
        <dbReference type="HAMAP-Rule" id="MF_01021"/>
    </source>
</evidence>
<proteinExistence type="inferred from homology"/>
<sequence length="132" mass="14843">MDTMNWLDQLKWDAQGLVPVIAQEAATGDVLMFAWMNREALAKTAELGRAVYYSRSRGKLWFKGEESGHVQQVHDIRLDCDSDVVLLKVTQLGHEPGIACHTGRHSCFFNALQNGAWQAVDPVLKDPESIYK</sequence>